<name>VKTK1_DABRR</name>
<accession>H6VC05</accession>
<comment type="function">
    <text evidence="3">Serine protease inhibitor. Inhibits activated protein C (APC) with an IC(50) of 3.5 nM in the presence of heparin (to which it strongly binds) and an IC(50) of 88.9 nM in its absence. Other targets are also significantly inhibited in presence of heparin: trypsin (PRSS1) (45%), coagulation FXIa (F11) (40%), and plasmin (PLG) (70%). In vivo, synergizes with RVV-X in promoting coagulation in mice and by extension in Russell's viper bite patients.</text>
</comment>
<comment type="subcellular location">
    <subcellularLocation>
        <location>Secreted</location>
    </subcellularLocation>
</comment>
<comment type="tissue specificity">
    <text>Expressed by the venom gland.</text>
</comment>
<comment type="mass spectrometry"/>
<comment type="similarity">
    <text evidence="4">Belongs to the venom Kunitz-type family.</text>
</comment>
<proteinExistence type="evidence at protein level"/>
<organism>
    <name type="scientific">Daboia russelii</name>
    <name type="common">Russel's viper</name>
    <name type="synonym">Vipera russelii</name>
    <dbReference type="NCBI Taxonomy" id="8707"/>
    <lineage>
        <taxon>Eukaryota</taxon>
        <taxon>Metazoa</taxon>
        <taxon>Chordata</taxon>
        <taxon>Craniata</taxon>
        <taxon>Vertebrata</taxon>
        <taxon>Euteleostomi</taxon>
        <taxon>Lepidosauria</taxon>
        <taxon>Squamata</taxon>
        <taxon>Bifurcata</taxon>
        <taxon>Unidentata</taxon>
        <taxon>Episquamata</taxon>
        <taxon>Toxicofera</taxon>
        <taxon>Serpentes</taxon>
        <taxon>Colubroidea</taxon>
        <taxon>Viperidae</taxon>
        <taxon>Viperinae</taxon>
        <taxon>Daboia</taxon>
    </lineage>
</organism>
<dbReference type="EMBL" id="JN825729">
    <property type="protein sequence ID" value="AFB74191.1"/>
    <property type="molecule type" value="mRNA"/>
</dbReference>
<dbReference type="EMBL" id="JQ011382">
    <property type="protein sequence ID" value="AFD04723.1"/>
    <property type="molecule type" value="mRNA"/>
</dbReference>
<dbReference type="SMR" id="H6VC05"/>
<dbReference type="GO" id="GO:0005576">
    <property type="term" value="C:extracellular region"/>
    <property type="evidence" value="ECO:0007669"/>
    <property type="project" value="UniProtKB-SubCell"/>
</dbReference>
<dbReference type="GO" id="GO:0004867">
    <property type="term" value="F:serine-type endopeptidase inhibitor activity"/>
    <property type="evidence" value="ECO:0007669"/>
    <property type="project" value="UniProtKB-KW"/>
</dbReference>
<dbReference type="GO" id="GO:0090729">
    <property type="term" value="F:toxin activity"/>
    <property type="evidence" value="ECO:0007669"/>
    <property type="project" value="UniProtKB-KW"/>
</dbReference>
<dbReference type="FunFam" id="4.10.410.10:FF:000021">
    <property type="entry name" value="Serine protease inhibitor, putative"/>
    <property type="match status" value="1"/>
</dbReference>
<dbReference type="Gene3D" id="4.10.410.10">
    <property type="entry name" value="Pancreatic trypsin inhibitor Kunitz domain"/>
    <property type="match status" value="1"/>
</dbReference>
<dbReference type="InterPro" id="IPR002223">
    <property type="entry name" value="Kunitz_BPTI"/>
</dbReference>
<dbReference type="InterPro" id="IPR036880">
    <property type="entry name" value="Kunitz_BPTI_sf"/>
</dbReference>
<dbReference type="InterPro" id="IPR020901">
    <property type="entry name" value="Prtase_inh_Kunz-CS"/>
</dbReference>
<dbReference type="InterPro" id="IPR050098">
    <property type="entry name" value="TFPI/VKTCI-like"/>
</dbReference>
<dbReference type="PANTHER" id="PTHR10083">
    <property type="entry name" value="KUNITZ-TYPE PROTEASE INHIBITOR-RELATED"/>
    <property type="match status" value="1"/>
</dbReference>
<dbReference type="Pfam" id="PF00014">
    <property type="entry name" value="Kunitz_BPTI"/>
    <property type="match status" value="1"/>
</dbReference>
<dbReference type="PRINTS" id="PR00759">
    <property type="entry name" value="BASICPTASE"/>
</dbReference>
<dbReference type="SMART" id="SM00131">
    <property type="entry name" value="KU"/>
    <property type="match status" value="1"/>
</dbReference>
<dbReference type="SUPFAM" id="SSF57362">
    <property type="entry name" value="BPTI-like"/>
    <property type="match status" value="1"/>
</dbReference>
<dbReference type="PROSITE" id="PS00280">
    <property type="entry name" value="BPTI_KUNITZ_1"/>
    <property type="match status" value="1"/>
</dbReference>
<dbReference type="PROSITE" id="PS50279">
    <property type="entry name" value="BPTI_KUNITZ_2"/>
    <property type="match status" value="1"/>
</dbReference>
<reference key="1">
    <citation type="journal article" date="2012" name="J. Biol. Chem.">
        <title>A novel heparin-dependent inhibitor of activated protein C that potentiates consumptive coagulopathy in Russell's viper envenomation.</title>
        <authorList>
            <person name="Cheng A.C."/>
            <person name="Wu H.L."/>
            <person name="Shi G.Y."/>
            <person name="Tsai I.H."/>
        </authorList>
    </citation>
    <scope>NUCLEOTIDE SEQUENCE [MRNA]</scope>
    <scope>FUNCTION</scope>
    <scope>BIOASSAY</scope>
    <scope>PYROGLUTAMATE FORMATION AT GLN-25</scope>
    <scope>MASS SPECTROMETRY</scope>
    <source>
        <tissue>Venom</tissue>
        <tissue>Venom gland</tissue>
    </source>
</reference>
<keyword id="KW-1204">Blood coagulation cascade activating toxin</keyword>
<keyword id="KW-1015">Disulfide bond</keyword>
<keyword id="KW-1199">Hemostasis impairing toxin</keyword>
<keyword id="KW-0646">Protease inhibitor</keyword>
<keyword id="KW-0873">Pyrrolidone carboxylic acid</keyword>
<keyword id="KW-0964">Secreted</keyword>
<keyword id="KW-0722">Serine protease inhibitor</keyword>
<keyword id="KW-0732">Signal</keyword>
<keyword id="KW-0800">Toxin</keyword>
<protein>
    <recommendedName>
        <fullName>Kunitz-type serine protease inhibitor DrKIn-I</fullName>
    </recommendedName>
    <alternativeName>
        <fullName>Daboia russelii Kunitz Inhibitor-I</fullName>
    </alternativeName>
</protein>
<sequence>MSSGGLLLLLGLLTLWAELTPISGQDRPKFCNLAPESGRCRGHLRRIYYNPDSNKCEVFFYGGCGGNDNNFETRKKCRQTCGAPRKGRPT</sequence>
<evidence type="ECO:0000250" key="1"/>
<evidence type="ECO:0000255" key="2">
    <source>
        <dbReference type="PROSITE-ProRule" id="PRU00031"/>
    </source>
</evidence>
<evidence type="ECO:0000269" key="3">
    <source>
    </source>
</evidence>
<evidence type="ECO:0000305" key="4"/>
<feature type="signal peptide">
    <location>
        <begin position="1"/>
        <end position="24"/>
    </location>
</feature>
<feature type="chain" id="PRO_0000422088" description="Kunitz-type serine protease inhibitor DrKIn-I">
    <location>
        <begin position="25"/>
        <end position="90"/>
    </location>
</feature>
<feature type="domain" description="BPTI/Kunitz inhibitor" evidence="2">
    <location>
        <begin position="31"/>
        <end position="81"/>
    </location>
</feature>
<feature type="region of interest" description="Putative heparin-binding motif">
    <location>
        <begin position="73"/>
        <end position="79"/>
    </location>
</feature>
<feature type="region of interest" description="Putative heparin-binding motif">
    <location>
        <begin position="84"/>
        <end position="89"/>
    </location>
</feature>
<feature type="site" description="Reactive bond for trypsin" evidence="1">
    <location>
        <begin position="41"/>
        <end position="42"/>
    </location>
</feature>
<feature type="modified residue" description="Pyrrolidone carboxylic acid" evidence="1">
    <location>
        <position position="25"/>
    </location>
</feature>
<feature type="disulfide bond" evidence="2">
    <location>
        <begin position="31"/>
        <end position="81"/>
    </location>
</feature>
<feature type="disulfide bond" evidence="2">
    <location>
        <begin position="40"/>
        <end position="64"/>
    </location>
</feature>
<feature type="disulfide bond" evidence="2">
    <location>
        <begin position="56"/>
        <end position="77"/>
    </location>
</feature>